<proteinExistence type="inferred from homology"/>
<organism>
    <name type="scientific">Alcanivorax borkumensis (strain ATCC 700651 / DSM 11573 / NCIMB 13689 / SK2)</name>
    <dbReference type="NCBI Taxonomy" id="393595"/>
    <lineage>
        <taxon>Bacteria</taxon>
        <taxon>Pseudomonadati</taxon>
        <taxon>Pseudomonadota</taxon>
        <taxon>Gammaproteobacteria</taxon>
        <taxon>Oceanospirillales</taxon>
        <taxon>Alcanivoracaceae</taxon>
        <taxon>Alcanivorax</taxon>
    </lineage>
</organism>
<evidence type="ECO:0000255" key="1">
    <source>
        <dbReference type="HAMAP-Rule" id="MF_00281"/>
    </source>
</evidence>
<name>SYFA_ALCBS</name>
<protein>
    <recommendedName>
        <fullName evidence="1">Phenylalanine--tRNA ligase alpha subunit</fullName>
        <ecNumber evidence="1">6.1.1.20</ecNumber>
    </recommendedName>
    <alternativeName>
        <fullName evidence="1">Phenylalanyl-tRNA synthetase alpha subunit</fullName>
        <shortName evidence="1">PheRS</shortName>
    </alternativeName>
</protein>
<feature type="chain" id="PRO_1000006796" description="Phenylalanine--tRNA ligase alpha subunit">
    <location>
        <begin position="1"/>
        <end position="339"/>
    </location>
</feature>
<feature type="binding site" evidence="1">
    <location>
        <position position="253"/>
    </location>
    <ligand>
        <name>Mg(2+)</name>
        <dbReference type="ChEBI" id="CHEBI:18420"/>
        <note>shared with beta subunit</note>
    </ligand>
</feature>
<sequence>MENLNALVDAALAEVEQAGDIRALDDVRVKYLGKKGEISALMKGLGKLSAEERPQAGAVINEGKQKVQDAIADRKSAMEEAALKQQLASETVDVTLPGRGELPGGLHPVNRMRRRIEDFFLRLGFDISEGPEVEDDFHNFEALNIPSHHPARAMHDTFYFGDGRLLRTHTSPVQVRVMEQGKPPFRIIAPGRVYRCDSDLTHTPMFHQVEGLLVDKGITFADLRGTVAEFLRYTFEVEDLPVRFRPSYFPFTEPSAEVDVGCVSCGGEGCRVCSHTGWIEIMGCGMVHPTVLEAGGVDAEEYSGFAFGMGIERIAMLRYGVNDLRLFFENDTRFLSQFG</sequence>
<accession>Q0VNG2</accession>
<comment type="catalytic activity">
    <reaction evidence="1">
        <text>tRNA(Phe) + L-phenylalanine + ATP = L-phenylalanyl-tRNA(Phe) + AMP + diphosphate + H(+)</text>
        <dbReference type="Rhea" id="RHEA:19413"/>
        <dbReference type="Rhea" id="RHEA-COMP:9668"/>
        <dbReference type="Rhea" id="RHEA-COMP:9699"/>
        <dbReference type="ChEBI" id="CHEBI:15378"/>
        <dbReference type="ChEBI" id="CHEBI:30616"/>
        <dbReference type="ChEBI" id="CHEBI:33019"/>
        <dbReference type="ChEBI" id="CHEBI:58095"/>
        <dbReference type="ChEBI" id="CHEBI:78442"/>
        <dbReference type="ChEBI" id="CHEBI:78531"/>
        <dbReference type="ChEBI" id="CHEBI:456215"/>
        <dbReference type="EC" id="6.1.1.20"/>
    </reaction>
</comment>
<comment type="cofactor">
    <cofactor evidence="1">
        <name>Mg(2+)</name>
        <dbReference type="ChEBI" id="CHEBI:18420"/>
    </cofactor>
    <text evidence="1">Binds 2 magnesium ions per tetramer.</text>
</comment>
<comment type="subunit">
    <text evidence="1">Tetramer of two alpha and two beta subunits.</text>
</comment>
<comment type="subcellular location">
    <subcellularLocation>
        <location evidence="1">Cytoplasm</location>
    </subcellularLocation>
</comment>
<comment type="similarity">
    <text evidence="1">Belongs to the class-II aminoacyl-tRNA synthetase family. Phe-tRNA synthetase alpha subunit type 1 subfamily.</text>
</comment>
<keyword id="KW-0030">Aminoacyl-tRNA synthetase</keyword>
<keyword id="KW-0067">ATP-binding</keyword>
<keyword id="KW-0963">Cytoplasm</keyword>
<keyword id="KW-0436">Ligase</keyword>
<keyword id="KW-0460">Magnesium</keyword>
<keyword id="KW-0479">Metal-binding</keyword>
<keyword id="KW-0547">Nucleotide-binding</keyword>
<keyword id="KW-0648">Protein biosynthesis</keyword>
<keyword id="KW-1185">Reference proteome</keyword>
<dbReference type="EC" id="6.1.1.20" evidence="1"/>
<dbReference type="EMBL" id="AM286690">
    <property type="protein sequence ID" value="CAL17286.1"/>
    <property type="molecule type" value="Genomic_DNA"/>
</dbReference>
<dbReference type="RefSeq" id="WP_011589119.1">
    <property type="nucleotide sequence ID" value="NC_008260.1"/>
</dbReference>
<dbReference type="SMR" id="Q0VNG2"/>
<dbReference type="STRING" id="393595.ABO_1838"/>
<dbReference type="KEGG" id="abo:ABO_1838"/>
<dbReference type="eggNOG" id="COG0016">
    <property type="taxonomic scope" value="Bacteria"/>
</dbReference>
<dbReference type="HOGENOM" id="CLU_025086_0_1_6"/>
<dbReference type="OrthoDB" id="9800719at2"/>
<dbReference type="Proteomes" id="UP000008871">
    <property type="component" value="Chromosome"/>
</dbReference>
<dbReference type="GO" id="GO:0005737">
    <property type="term" value="C:cytoplasm"/>
    <property type="evidence" value="ECO:0007669"/>
    <property type="project" value="UniProtKB-SubCell"/>
</dbReference>
<dbReference type="GO" id="GO:0005524">
    <property type="term" value="F:ATP binding"/>
    <property type="evidence" value="ECO:0007669"/>
    <property type="project" value="UniProtKB-UniRule"/>
</dbReference>
<dbReference type="GO" id="GO:0000287">
    <property type="term" value="F:magnesium ion binding"/>
    <property type="evidence" value="ECO:0007669"/>
    <property type="project" value="UniProtKB-UniRule"/>
</dbReference>
<dbReference type="GO" id="GO:0004826">
    <property type="term" value="F:phenylalanine-tRNA ligase activity"/>
    <property type="evidence" value="ECO:0007669"/>
    <property type="project" value="UniProtKB-UniRule"/>
</dbReference>
<dbReference type="GO" id="GO:0000049">
    <property type="term" value="F:tRNA binding"/>
    <property type="evidence" value="ECO:0007669"/>
    <property type="project" value="InterPro"/>
</dbReference>
<dbReference type="GO" id="GO:0006432">
    <property type="term" value="P:phenylalanyl-tRNA aminoacylation"/>
    <property type="evidence" value="ECO:0007669"/>
    <property type="project" value="UniProtKB-UniRule"/>
</dbReference>
<dbReference type="CDD" id="cd00496">
    <property type="entry name" value="PheRS_alpha_core"/>
    <property type="match status" value="1"/>
</dbReference>
<dbReference type="FunFam" id="3.30.930.10:FF:000003">
    <property type="entry name" value="Phenylalanine--tRNA ligase alpha subunit"/>
    <property type="match status" value="1"/>
</dbReference>
<dbReference type="Gene3D" id="3.30.930.10">
    <property type="entry name" value="Bira Bifunctional Protein, Domain 2"/>
    <property type="match status" value="1"/>
</dbReference>
<dbReference type="HAMAP" id="MF_00281">
    <property type="entry name" value="Phe_tRNA_synth_alpha1"/>
    <property type="match status" value="1"/>
</dbReference>
<dbReference type="InterPro" id="IPR006195">
    <property type="entry name" value="aa-tRNA-synth_II"/>
</dbReference>
<dbReference type="InterPro" id="IPR045864">
    <property type="entry name" value="aa-tRNA-synth_II/BPL/LPL"/>
</dbReference>
<dbReference type="InterPro" id="IPR004529">
    <property type="entry name" value="Phe-tRNA-synth_IIc_asu"/>
</dbReference>
<dbReference type="InterPro" id="IPR004188">
    <property type="entry name" value="Phe-tRNA_ligase_II_N"/>
</dbReference>
<dbReference type="InterPro" id="IPR022911">
    <property type="entry name" value="Phe_tRNA_ligase_alpha1_bac"/>
</dbReference>
<dbReference type="InterPro" id="IPR002319">
    <property type="entry name" value="Phenylalanyl-tRNA_Synthase"/>
</dbReference>
<dbReference type="InterPro" id="IPR010978">
    <property type="entry name" value="tRNA-bd_arm"/>
</dbReference>
<dbReference type="NCBIfam" id="TIGR00468">
    <property type="entry name" value="pheS"/>
    <property type="match status" value="1"/>
</dbReference>
<dbReference type="PANTHER" id="PTHR11538:SF41">
    <property type="entry name" value="PHENYLALANINE--TRNA LIGASE, MITOCHONDRIAL"/>
    <property type="match status" value="1"/>
</dbReference>
<dbReference type="PANTHER" id="PTHR11538">
    <property type="entry name" value="PHENYLALANYL-TRNA SYNTHETASE"/>
    <property type="match status" value="1"/>
</dbReference>
<dbReference type="Pfam" id="PF02912">
    <property type="entry name" value="Phe_tRNA-synt_N"/>
    <property type="match status" value="1"/>
</dbReference>
<dbReference type="Pfam" id="PF01409">
    <property type="entry name" value="tRNA-synt_2d"/>
    <property type="match status" value="1"/>
</dbReference>
<dbReference type="SUPFAM" id="SSF55681">
    <property type="entry name" value="Class II aaRS and biotin synthetases"/>
    <property type="match status" value="1"/>
</dbReference>
<dbReference type="SUPFAM" id="SSF46589">
    <property type="entry name" value="tRNA-binding arm"/>
    <property type="match status" value="1"/>
</dbReference>
<dbReference type="PROSITE" id="PS50862">
    <property type="entry name" value="AA_TRNA_LIGASE_II"/>
    <property type="match status" value="1"/>
</dbReference>
<reference key="1">
    <citation type="journal article" date="2006" name="Nat. Biotechnol.">
        <title>Genome sequence of the ubiquitous hydrocarbon-degrading marine bacterium Alcanivorax borkumensis.</title>
        <authorList>
            <person name="Schneiker S."/>
            <person name="Martins dos Santos V.A.P."/>
            <person name="Bartels D."/>
            <person name="Bekel T."/>
            <person name="Brecht M."/>
            <person name="Buhrmester J."/>
            <person name="Chernikova T.N."/>
            <person name="Denaro R."/>
            <person name="Ferrer M."/>
            <person name="Gertler C."/>
            <person name="Goesmann A."/>
            <person name="Golyshina O.V."/>
            <person name="Kaminski F."/>
            <person name="Khachane A.N."/>
            <person name="Lang S."/>
            <person name="Linke B."/>
            <person name="McHardy A.C."/>
            <person name="Meyer F."/>
            <person name="Nechitaylo T."/>
            <person name="Puehler A."/>
            <person name="Regenhardt D."/>
            <person name="Rupp O."/>
            <person name="Sabirova J.S."/>
            <person name="Selbitschka W."/>
            <person name="Yakimov M.M."/>
            <person name="Timmis K.N."/>
            <person name="Vorhoelter F.-J."/>
            <person name="Weidner S."/>
            <person name="Kaiser O."/>
            <person name="Golyshin P.N."/>
        </authorList>
    </citation>
    <scope>NUCLEOTIDE SEQUENCE [LARGE SCALE GENOMIC DNA]</scope>
    <source>
        <strain>ATCC 700651 / DSM 11573 / NCIMB 13689 / SK2</strain>
    </source>
</reference>
<gene>
    <name evidence="1" type="primary">pheS</name>
    <name type="ordered locus">ABO_1838</name>
</gene>